<evidence type="ECO:0000255" key="1">
    <source>
        <dbReference type="HAMAP-Rule" id="MF_00303"/>
    </source>
</evidence>
<evidence type="ECO:0000256" key="2">
    <source>
        <dbReference type="SAM" id="MobiDB-lite"/>
    </source>
</evidence>
<sequence>MQVTETTSEGLKREFQVLLPANELEDRLNTELSNIKGKVQIKGFRPGKVPVAHLRKVYGKSVMADVLQNAVNEANQQIVTDKGLRLALEPQIEFPKDEEQTIIERALDAKGDLAFKVKLEVLPSFELADLSDVSIKKLVLKPSDEEVNETLERMAKDSRSFEPREEGAEAQSGDRVTIDFVGRIDGTEFEGGKGEDVDLELGSNTFIPGFEDQLVGAKVGDSRLVKVAFPADYQAEQLAGKDAEFDVTVKAVAAPGETKIDDELAKRFGMDDLEKLKEAVSKAVGSDYEAQSRRKLKKELLDALDGKYAFDLPPSLVHQEFAAVWAQVEQDLKTRGKTFEDEGTTEEASQAEYRKIAERRVRLGLVLAQVGETADIKVSDDEVNQALFARIRQFPGQEKQVYDFYRNNPQALAELRAPLFEEKVVDHVLGQVQVVEEPVSKEALFAEDDEADAVTGGAATDEKPSESNNEAAADKAAG</sequence>
<feature type="chain" id="PRO_1000198165" description="Trigger factor">
    <location>
        <begin position="1"/>
        <end position="478"/>
    </location>
</feature>
<feature type="domain" description="PPIase FKBP-type" evidence="1">
    <location>
        <begin position="173"/>
        <end position="258"/>
    </location>
</feature>
<feature type="region of interest" description="Disordered" evidence="2">
    <location>
        <begin position="154"/>
        <end position="173"/>
    </location>
</feature>
<feature type="region of interest" description="Disordered" evidence="2">
    <location>
        <begin position="441"/>
        <end position="478"/>
    </location>
</feature>
<feature type="compositionally biased region" description="Basic and acidic residues" evidence="2">
    <location>
        <begin position="154"/>
        <end position="167"/>
    </location>
</feature>
<organism>
    <name type="scientific">Methylorubrum extorquens (strain CM4 / NCIMB 13688)</name>
    <name type="common">Methylobacterium extorquens</name>
    <dbReference type="NCBI Taxonomy" id="440085"/>
    <lineage>
        <taxon>Bacteria</taxon>
        <taxon>Pseudomonadati</taxon>
        <taxon>Pseudomonadota</taxon>
        <taxon>Alphaproteobacteria</taxon>
        <taxon>Hyphomicrobiales</taxon>
        <taxon>Methylobacteriaceae</taxon>
        <taxon>Methylorubrum</taxon>
    </lineage>
</organism>
<keyword id="KW-0131">Cell cycle</keyword>
<keyword id="KW-0132">Cell division</keyword>
<keyword id="KW-0143">Chaperone</keyword>
<keyword id="KW-0963">Cytoplasm</keyword>
<keyword id="KW-0413">Isomerase</keyword>
<keyword id="KW-0697">Rotamase</keyword>
<gene>
    <name evidence="1" type="primary">tig</name>
    <name type="ordered locus">Mchl_2678</name>
</gene>
<dbReference type="EC" id="5.2.1.8" evidence="1"/>
<dbReference type="EMBL" id="CP001298">
    <property type="protein sequence ID" value="ACK83518.1"/>
    <property type="molecule type" value="Genomic_DNA"/>
</dbReference>
<dbReference type="RefSeq" id="WP_012253842.1">
    <property type="nucleotide sequence ID" value="NC_011757.1"/>
</dbReference>
<dbReference type="SMR" id="B7KNS9"/>
<dbReference type="GeneID" id="72990086"/>
<dbReference type="KEGG" id="mch:Mchl_2678"/>
<dbReference type="HOGENOM" id="CLU_033058_2_2_5"/>
<dbReference type="Proteomes" id="UP000002385">
    <property type="component" value="Chromosome"/>
</dbReference>
<dbReference type="GO" id="GO:0005737">
    <property type="term" value="C:cytoplasm"/>
    <property type="evidence" value="ECO:0007669"/>
    <property type="project" value="UniProtKB-SubCell"/>
</dbReference>
<dbReference type="GO" id="GO:0003755">
    <property type="term" value="F:peptidyl-prolyl cis-trans isomerase activity"/>
    <property type="evidence" value="ECO:0007669"/>
    <property type="project" value="UniProtKB-UniRule"/>
</dbReference>
<dbReference type="GO" id="GO:0044183">
    <property type="term" value="F:protein folding chaperone"/>
    <property type="evidence" value="ECO:0007669"/>
    <property type="project" value="TreeGrafter"/>
</dbReference>
<dbReference type="GO" id="GO:0043022">
    <property type="term" value="F:ribosome binding"/>
    <property type="evidence" value="ECO:0007669"/>
    <property type="project" value="TreeGrafter"/>
</dbReference>
<dbReference type="GO" id="GO:0051083">
    <property type="term" value="P:'de novo' cotranslational protein folding"/>
    <property type="evidence" value="ECO:0007669"/>
    <property type="project" value="TreeGrafter"/>
</dbReference>
<dbReference type="GO" id="GO:0051301">
    <property type="term" value="P:cell division"/>
    <property type="evidence" value="ECO:0007669"/>
    <property type="project" value="UniProtKB-KW"/>
</dbReference>
<dbReference type="GO" id="GO:0061077">
    <property type="term" value="P:chaperone-mediated protein folding"/>
    <property type="evidence" value="ECO:0007669"/>
    <property type="project" value="TreeGrafter"/>
</dbReference>
<dbReference type="GO" id="GO:0015031">
    <property type="term" value="P:protein transport"/>
    <property type="evidence" value="ECO:0007669"/>
    <property type="project" value="UniProtKB-UniRule"/>
</dbReference>
<dbReference type="GO" id="GO:0043335">
    <property type="term" value="P:protein unfolding"/>
    <property type="evidence" value="ECO:0007669"/>
    <property type="project" value="TreeGrafter"/>
</dbReference>
<dbReference type="FunFam" id="3.10.50.40:FF:000001">
    <property type="entry name" value="Trigger factor"/>
    <property type="match status" value="1"/>
</dbReference>
<dbReference type="Gene3D" id="3.10.50.40">
    <property type="match status" value="1"/>
</dbReference>
<dbReference type="Gene3D" id="3.30.70.1050">
    <property type="entry name" value="Trigger factor ribosome-binding domain"/>
    <property type="match status" value="1"/>
</dbReference>
<dbReference type="Gene3D" id="1.10.3120.10">
    <property type="entry name" value="Trigger factor, C-terminal domain"/>
    <property type="match status" value="1"/>
</dbReference>
<dbReference type="HAMAP" id="MF_00303">
    <property type="entry name" value="Trigger_factor_Tig"/>
    <property type="match status" value="1"/>
</dbReference>
<dbReference type="InterPro" id="IPR046357">
    <property type="entry name" value="PPIase_dom_sf"/>
</dbReference>
<dbReference type="InterPro" id="IPR001179">
    <property type="entry name" value="PPIase_FKBP_dom"/>
</dbReference>
<dbReference type="InterPro" id="IPR005215">
    <property type="entry name" value="Trig_fac"/>
</dbReference>
<dbReference type="InterPro" id="IPR008880">
    <property type="entry name" value="Trigger_fac_C"/>
</dbReference>
<dbReference type="InterPro" id="IPR037041">
    <property type="entry name" value="Trigger_fac_C_sf"/>
</dbReference>
<dbReference type="InterPro" id="IPR008881">
    <property type="entry name" value="Trigger_fac_ribosome-bd_bac"/>
</dbReference>
<dbReference type="InterPro" id="IPR036611">
    <property type="entry name" value="Trigger_fac_ribosome-bd_sf"/>
</dbReference>
<dbReference type="InterPro" id="IPR027304">
    <property type="entry name" value="Trigger_fact/SurA_dom_sf"/>
</dbReference>
<dbReference type="NCBIfam" id="TIGR00115">
    <property type="entry name" value="tig"/>
    <property type="match status" value="1"/>
</dbReference>
<dbReference type="PANTHER" id="PTHR30560">
    <property type="entry name" value="TRIGGER FACTOR CHAPERONE AND PEPTIDYL-PROLYL CIS/TRANS ISOMERASE"/>
    <property type="match status" value="1"/>
</dbReference>
<dbReference type="PANTHER" id="PTHR30560:SF3">
    <property type="entry name" value="TRIGGER FACTOR-LIKE PROTEIN TIG, CHLOROPLASTIC"/>
    <property type="match status" value="1"/>
</dbReference>
<dbReference type="Pfam" id="PF00254">
    <property type="entry name" value="FKBP_C"/>
    <property type="match status" value="1"/>
</dbReference>
<dbReference type="Pfam" id="PF05698">
    <property type="entry name" value="Trigger_C"/>
    <property type="match status" value="1"/>
</dbReference>
<dbReference type="Pfam" id="PF05697">
    <property type="entry name" value="Trigger_N"/>
    <property type="match status" value="1"/>
</dbReference>
<dbReference type="PIRSF" id="PIRSF003095">
    <property type="entry name" value="Trigger_factor"/>
    <property type="match status" value="1"/>
</dbReference>
<dbReference type="SUPFAM" id="SSF54534">
    <property type="entry name" value="FKBP-like"/>
    <property type="match status" value="1"/>
</dbReference>
<dbReference type="SUPFAM" id="SSF109998">
    <property type="entry name" value="Triger factor/SurA peptide-binding domain-like"/>
    <property type="match status" value="1"/>
</dbReference>
<dbReference type="SUPFAM" id="SSF102735">
    <property type="entry name" value="Trigger factor ribosome-binding domain"/>
    <property type="match status" value="1"/>
</dbReference>
<dbReference type="PROSITE" id="PS50059">
    <property type="entry name" value="FKBP_PPIASE"/>
    <property type="match status" value="1"/>
</dbReference>
<reference key="1">
    <citation type="submission" date="2008-12" db="EMBL/GenBank/DDBJ databases">
        <title>Complete sequence of chromosome of Methylobacterium chloromethanicum CM4.</title>
        <authorList>
            <consortium name="US DOE Joint Genome Institute"/>
            <person name="Lucas S."/>
            <person name="Copeland A."/>
            <person name="Lapidus A."/>
            <person name="Glavina del Rio T."/>
            <person name="Dalin E."/>
            <person name="Tice H."/>
            <person name="Bruce D."/>
            <person name="Goodwin L."/>
            <person name="Pitluck S."/>
            <person name="Chertkov O."/>
            <person name="Brettin T."/>
            <person name="Detter J.C."/>
            <person name="Han C."/>
            <person name="Larimer F."/>
            <person name="Land M."/>
            <person name="Hauser L."/>
            <person name="Kyrpides N."/>
            <person name="Mikhailova N."/>
            <person name="Marx C."/>
            <person name="Richardson P."/>
        </authorList>
    </citation>
    <scope>NUCLEOTIDE SEQUENCE [LARGE SCALE GENOMIC DNA]</scope>
    <source>
        <strain>CM4 / NCIMB 13688</strain>
    </source>
</reference>
<comment type="function">
    <text evidence="1">Involved in protein export. Acts as a chaperone by maintaining the newly synthesized protein in an open conformation. Functions as a peptidyl-prolyl cis-trans isomerase.</text>
</comment>
<comment type="catalytic activity">
    <reaction evidence="1">
        <text>[protein]-peptidylproline (omega=180) = [protein]-peptidylproline (omega=0)</text>
        <dbReference type="Rhea" id="RHEA:16237"/>
        <dbReference type="Rhea" id="RHEA-COMP:10747"/>
        <dbReference type="Rhea" id="RHEA-COMP:10748"/>
        <dbReference type="ChEBI" id="CHEBI:83833"/>
        <dbReference type="ChEBI" id="CHEBI:83834"/>
        <dbReference type="EC" id="5.2.1.8"/>
    </reaction>
</comment>
<comment type="subcellular location">
    <subcellularLocation>
        <location>Cytoplasm</location>
    </subcellularLocation>
    <text evidence="1">About half TF is bound to the ribosome near the polypeptide exit tunnel while the other half is free in the cytoplasm.</text>
</comment>
<comment type="domain">
    <text evidence="1">Consists of 3 domains; the N-terminus binds the ribosome, the middle domain has PPIase activity, while the C-terminus has intrinsic chaperone activity on its own.</text>
</comment>
<comment type="similarity">
    <text evidence="1">Belongs to the FKBP-type PPIase family. Tig subfamily.</text>
</comment>
<name>TIG_METC4</name>
<accession>B7KNS9</accession>
<proteinExistence type="inferred from homology"/>
<protein>
    <recommendedName>
        <fullName evidence="1">Trigger factor</fullName>
        <shortName evidence="1">TF</shortName>
        <ecNumber evidence="1">5.2.1.8</ecNumber>
    </recommendedName>
    <alternativeName>
        <fullName evidence="1">PPIase</fullName>
    </alternativeName>
</protein>